<comment type="function">
    <text evidence="4 6 7 8">High affinity ammonium transporter probably involved in ammonium uptake from the soil, long-distance transport to the shoots and re-uptake of apoplastic ammonium that derives from photorespiration in shoots. Contributes with AMT1-3 to the overall ammonium uptake capacity in roots under nitrogen-deficiency conditions.</text>
</comment>
<comment type="biophysicochemical properties">
    <kinetics>
        <KM evidence="4 6">22 uM for ammonium chloride (at external pH 6.1)</KM>
        <text>Measured in yeast knockout mutant YCW012.</text>
    </kinetics>
</comment>
<comment type="subunit">
    <text evidence="11">Self interacts. Interacts with the receptor protein kinases CEPR2, At2g28990 and PAM74.</text>
</comment>
<comment type="interaction">
    <interactant intactId="EBI-16426081">
        <id>P54144</id>
    </interactant>
    <interactant intactId="EBI-16716530">
        <id>Q9SQH9</id>
        <label>AMT1-3</label>
    </interactant>
    <organismsDiffer>false</organismsDiffer>
    <experiments>3</experiments>
</comment>
<comment type="subcellular location">
    <subcellularLocation>
        <location evidence="5 7 8">Cell membrane</location>
        <topology evidence="5 7 8">Multi-pass membrane protein</topology>
    </subcellularLocation>
</comment>
<comment type="tissue specificity">
    <text evidence="2 7 8 9">Highly expressed in roots. Expressed in root tips, root hairs, root epidermis, rhizodermis, cortex and pericycle. Expressed in leaves epidermal and mesophyll cells.</text>
</comment>
<comment type="induction">
    <text evidence="7 8 9 10">By nitrogen deprivation in roots and nitrogen supply in leaves.</text>
</comment>
<comment type="disruption phenotype">
    <text evidence="3">No effect on ammonium uptake. Higher expression of AMT1-2; AMT1-3 and AMT2-1.</text>
</comment>
<comment type="similarity">
    <text evidence="12">Belongs to the ammonia transporter channel (TC 1.A.11.2) family.</text>
</comment>
<comment type="sequence caution" evidence="12">
    <conflict type="frameshift">
        <sequence resource="EMBL-CDS" id="AAK59819"/>
    </conflict>
</comment>
<comment type="sequence caution" evidence="12">
    <conflict type="frameshift">
        <sequence resource="EMBL-CDS" id="AAM47470"/>
    </conflict>
</comment>
<accession>P54144</accession>
<accession>Q94C23</accession>
<evidence type="ECO:0000255" key="1"/>
<evidence type="ECO:0000269" key="2">
    <source>
    </source>
</evidence>
<evidence type="ECO:0000269" key="3">
    <source>
    </source>
</evidence>
<evidence type="ECO:0000269" key="4">
    <source>
    </source>
</evidence>
<evidence type="ECO:0000269" key="5">
    <source>
    </source>
</evidence>
<evidence type="ECO:0000269" key="6">
    <source>
    </source>
</evidence>
<evidence type="ECO:0000269" key="7">
    <source>
    </source>
</evidence>
<evidence type="ECO:0000269" key="8">
    <source>
    </source>
</evidence>
<evidence type="ECO:0000269" key="9">
    <source>
    </source>
</evidence>
<evidence type="ECO:0000269" key="10">
    <source>
    </source>
</evidence>
<evidence type="ECO:0000269" key="11">
    <source>
    </source>
</evidence>
<evidence type="ECO:0000305" key="12"/>
<evidence type="ECO:0007744" key="13">
    <source>
    </source>
</evidence>
<evidence type="ECO:0007744" key="14">
    <source>
    </source>
</evidence>
<evidence type="ECO:0007744" key="15">
    <source>
    </source>
</evidence>
<evidence type="ECO:0007744" key="16">
    <source>
    </source>
</evidence>
<evidence type="ECO:0007744" key="17">
    <source>
    </source>
</evidence>
<evidence type="ECO:0007744" key="18">
    <source>
    </source>
</evidence>
<proteinExistence type="evidence at protein level"/>
<reference key="1">
    <citation type="journal article" date="1994" name="EMBO J.">
        <title>Identification of a high affinity NH4+ transporter from plants.</title>
        <authorList>
            <person name="Ninnemann O."/>
            <person name="Janniaux J.-C."/>
            <person name="Frommer W.B."/>
        </authorList>
    </citation>
    <scope>NUCLEOTIDE SEQUENCE [MRNA]</scope>
    <source>
        <strain>cv. Landsberg erecta</strain>
    </source>
</reference>
<reference key="2">
    <citation type="journal article" date="1999" name="Nature">
        <title>Sequence and analysis of chromosome 4 of the plant Arabidopsis thaliana.</title>
        <authorList>
            <person name="Mayer K.F.X."/>
            <person name="Schueller C."/>
            <person name="Wambutt R."/>
            <person name="Murphy G."/>
            <person name="Volckaert G."/>
            <person name="Pohl T."/>
            <person name="Duesterhoeft A."/>
            <person name="Stiekema W."/>
            <person name="Entian K.-D."/>
            <person name="Terryn N."/>
            <person name="Harris B."/>
            <person name="Ansorge W."/>
            <person name="Brandt P."/>
            <person name="Grivell L.A."/>
            <person name="Rieger M."/>
            <person name="Weichselgartner M."/>
            <person name="de Simone V."/>
            <person name="Obermaier B."/>
            <person name="Mache R."/>
            <person name="Mueller M."/>
            <person name="Kreis M."/>
            <person name="Delseny M."/>
            <person name="Puigdomenech P."/>
            <person name="Watson M."/>
            <person name="Schmidtheini T."/>
            <person name="Reichert B."/>
            <person name="Portetelle D."/>
            <person name="Perez-Alonso M."/>
            <person name="Boutry M."/>
            <person name="Bancroft I."/>
            <person name="Vos P."/>
            <person name="Hoheisel J."/>
            <person name="Zimmermann W."/>
            <person name="Wedler H."/>
            <person name="Ridley P."/>
            <person name="Langham S.-A."/>
            <person name="McCullagh B."/>
            <person name="Bilham L."/>
            <person name="Robben J."/>
            <person name="van der Schueren J."/>
            <person name="Grymonprez B."/>
            <person name="Chuang Y.-J."/>
            <person name="Vandenbussche F."/>
            <person name="Braeken M."/>
            <person name="Weltjens I."/>
            <person name="Voet M."/>
            <person name="Bastiaens I."/>
            <person name="Aert R."/>
            <person name="Defoor E."/>
            <person name="Weitzenegger T."/>
            <person name="Bothe G."/>
            <person name="Ramsperger U."/>
            <person name="Hilbert H."/>
            <person name="Braun M."/>
            <person name="Holzer E."/>
            <person name="Brandt A."/>
            <person name="Peters S."/>
            <person name="van Staveren M."/>
            <person name="Dirkse W."/>
            <person name="Mooijman P."/>
            <person name="Klein Lankhorst R."/>
            <person name="Rose M."/>
            <person name="Hauf J."/>
            <person name="Koetter P."/>
            <person name="Berneiser S."/>
            <person name="Hempel S."/>
            <person name="Feldpausch M."/>
            <person name="Lamberth S."/>
            <person name="Van den Daele H."/>
            <person name="De Keyser A."/>
            <person name="Buysshaert C."/>
            <person name="Gielen J."/>
            <person name="Villarroel R."/>
            <person name="De Clercq R."/>
            <person name="van Montagu M."/>
            <person name="Rogers J."/>
            <person name="Cronin A."/>
            <person name="Quail M.A."/>
            <person name="Bray-Allen S."/>
            <person name="Clark L."/>
            <person name="Doggett J."/>
            <person name="Hall S."/>
            <person name="Kay M."/>
            <person name="Lennard N."/>
            <person name="McLay K."/>
            <person name="Mayes R."/>
            <person name="Pettett A."/>
            <person name="Rajandream M.A."/>
            <person name="Lyne M."/>
            <person name="Benes V."/>
            <person name="Rechmann S."/>
            <person name="Borkova D."/>
            <person name="Bloecker H."/>
            <person name="Scharfe M."/>
            <person name="Grimm M."/>
            <person name="Loehnert T.-H."/>
            <person name="Dose S."/>
            <person name="de Haan M."/>
            <person name="Maarse A.C."/>
            <person name="Schaefer M."/>
            <person name="Mueller-Auer S."/>
            <person name="Gabel C."/>
            <person name="Fuchs M."/>
            <person name="Fartmann B."/>
            <person name="Granderath K."/>
            <person name="Dauner D."/>
            <person name="Herzl A."/>
            <person name="Neumann S."/>
            <person name="Argiriou A."/>
            <person name="Vitale D."/>
            <person name="Liguori R."/>
            <person name="Piravandi E."/>
            <person name="Massenet O."/>
            <person name="Quigley F."/>
            <person name="Clabauld G."/>
            <person name="Muendlein A."/>
            <person name="Felber R."/>
            <person name="Schnabl S."/>
            <person name="Hiller R."/>
            <person name="Schmidt W."/>
            <person name="Lecharny A."/>
            <person name="Aubourg S."/>
            <person name="Chefdor F."/>
            <person name="Cooke R."/>
            <person name="Berger C."/>
            <person name="Monfort A."/>
            <person name="Casacuberta E."/>
            <person name="Gibbons T."/>
            <person name="Weber N."/>
            <person name="Vandenbol M."/>
            <person name="Bargues M."/>
            <person name="Terol J."/>
            <person name="Torres A."/>
            <person name="Perez-Perez A."/>
            <person name="Purnelle B."/>
            <person name="Bent E."/>
            <person name="Johnson S."/>
            <person name="Tacon D."/>
            <person name="Jesse T."/>
            <person name="Heijnen L."/>
            <person name="Schwarz S."/>
            <person name="Scholler P."/>
            <person name="Heber S."/>
            <person name="Francs P."/>
            <person name="Bielke C."/>
            <person name="Frishman D."/>
            <person name="Haase D."/>
            <person name="Lemcke K."/>
            <person name="Mewes H.-W."/>
            <person name="Stocker S."/>
            <person name="Zaccaria P."/>
            <person name="Bevan M."/>
            <person name="Wilson R.K."/>
            <person name="de la Bastide M."/>
            <person name="Habermann K."/>
            <person name="Parnell L."/>
            <person name="Dedhia N."/>
            <person name="Gnoj L."/>
            <person name="Schutz K."/>
            <person name="Huang E."/>
            <person name="Spiegel L."/>
            <person name="Sekhon M."/>
            <person name="Murray J."/>
            <person name="Sheet P."/>
            <person name="Cordes M."/>
            <person name="Abu-Threideh J."/>
            <person name="Stoneking T."/>
            <person name="Kalicki J."/>
            <person name="Graves T."/>
            <person name="Harmon G."/>
            <person name="Edwards J."/>
            <person name="Latreille P."/>
            <person name="Courtney L."/>
            <person name="Cloud J."/>
            <person name="Abbott A."/>
            <person name="Scott K."/>
            <person name="Johnson D."/>
            <person name="Minx P."/>
            <person name="Bentley D."/>
            <person name="Fulton B."/>
            <person name="Miller N."/>
            <person name="Greco T."/>
            <person name="Kemp K."/>
            <person name="Kramer J."/>
            <person name="Fulton L."/>
            <person name="Mardis E."/>
            <person name="Dante M."/>
            <person name="Pepin K."/>
            <person name="Hillier L.W."/>
            <person name="Nelson J."/>
            <person name="Spieth J."/>
            <person name="Ryan E."/>
            <person name="Andrews S."/>
            <person name="Geisel C."/>
            <person name="Layman D."/>
            <person name="Du H."/>
            <person name="Ali J."/>
            <person name="Berghoff A."/>
            <person name="Jones K."/>
            <person name="Drone K."/>
            <person name="Cotton M."/>
            <person name="Joshu C."/>
            <person name="Antonoiu B."/>
            <person name="Zidanic M."/>
            <person name="Strong C."/>
            <person name="Sun H."/>
            <person name="Lamar B."/>
            <person name="Yordan C."/>
            <person name="Ma P."/>
            <person name="Zhong J."/>
            <person name="Preston R."/>
            <person name="Vil D."/>
            <person name="Shekher M."/>
            <person name="Matero A."/>
            <person name="Shah R."/>
            <person name="Swaby I.K."/>
            <person name="O'Shaughnessy A."/>
            <person name="Rodriguez M."/>
            <person name="Hoffman J."/>
            <person name="Till S."/>
            <person name="Granat S."/>
            <person name="Shohdy N."/>
            <person name="Hasegawa A."/>
            <person name="Hameed A."/>
            <person name="Lodhi M."/>
            <person name="Johnson A."/>
            <person name="Chen E."/>
            <person name="Marra M.A."/>
            <person name="Martienssen R."/>
            <person name="McCombie W.R."/>
        </authorList>
    </citation>
    <scope>NUCLEOTIDE SEQUENCE [LARGE SCALE GENOMIC DNA]</scope>
    <source>
        <strain>cv. Columbia</strain>
    </source>
</reference>
<reference key="3">
    <citation type="journal article" date="2017" name="Plant J.">
        <title>Araport11: a complete reannotation of the Arabidopsis thaliana reference genome.</title>
        <authorList>
            <person name="Cheng C.Y."/>
            <person name="Krishnakumar V."/>
            <person name="Chan A.P."/>
            <person name="Thibaud-Nissen F."/>
            <person name="Schobel S."/>
            <person name="Town C.D."/>
        </authorList>
    </citation>
    <scope>GENOME REANNOTATION</scope>
    <source>
        <strain>cv. Columbia</strain>
    </source>
</reference>
<reference key="4">
    <citation type="journal article" date="2003" name="Science">
        <title>Empirical analysis of transcriptional activity in the Arabidopsis genome.</title>
        <authorList>
            <person name="Yamada K."/>
            <person name="Lim J."/>
            <person name="Dale J.M."/>
            <person name="Chen H."/>
            <person name="Shinn P."/>
            <person name="Palm C.J."/>
            <person name="Southwick A.M."/>
            <person name="Wu H.C."/>
            <person name="Kim C.J."/>
            <person name="Nguyen M."/>
            <person name="Pham P.K."/>
            <person name="Cheuk R.F."/>
            <person name="Karlin-Newmann G."/>
            <person name="Liu S.X."/>
            <person name="Lam B."/>
            <person name="Sakano H."/>
            <person name="Wu T."/>
            <person name="Yu G."/>
            <person name="Miranda M."/>
            <person name="Quach H.L."/>
            <person name="Tripp M."/>
            <person name="Chang C.H."/>
            <person name="Lee J.M."/>
            <person name="Toriumi M.J."/>
            <person name="Chan M.M."/>
            <person name="Tang C.C."/>
            <person name="Onodera C.S."/>
            <person name="Deng J.M."/>
            <person name="Akiyama K."/>
            <person name="Ansari Y."/>
            <person name="Arakawa T."/>
            <person name="Banh J."/>
            <person name="Banno F."/>
            <person name="Bowser L."/>
            <person name="Brooks S.Y."/>
            <person name="Carninci P."/>
            <person name="Chao Q."/>
            <person name="Choy N."/>
            <person name="Enju A."/>
            <person name="Goldsmith A.D."/>
            <person name="Gurjal M."/>
            <person name="Hansen N.F."/>
            <person name="Hayashizaki Y."/>
            <person name="Johnson-Hopson C."/>
            <person name="Hsuan V.W."/>
            <person name="Iida K."/>
            <person name="Karnes M."/>
            <person name="Khan S."/>
            <person name="Koesema E."/>
            <person name="Ishida J."/>
            <person name="Jiang P.X."/>
            <person name="Jones T."/>
            <person name="Kawai J."/>
            <person name="Kamiya A."/>
            <person name="Meyers C."/>
            <person name="Nakajima M."/>
            <person name="Narusaka M."/>
            <person name="Seki M."/>
            <person name="Sakurai T."/>
            <person name="Satou M."/>
            <person name="Tamse R."/>
            <person name="Vaysberg M."/>
            <person name="Wallender E.K."/>
            <person name="Wong C."/>
            <person name="Yamamura Y."/>
            <person name="Yuan S."/>
            <person name="Shinozaki K."/>
            <person name="Davis R.W."/>
            <person name="Theologis A."/>
            <person name="Ecker J.R."/>
        </authorList>
    </citation>
    <scope>NUCLEOTIDE SEQUENCE [LARGE SCALE MRNA]</scope>
    <source>
        <strain>cv. Columbia</strain>
    </source>
</reference>
<reference key="5">
    <citation type="journal article" date="1999" name="Plant Cell">
        <title>Three functional transporters for constitutive, diurnally regulated, and starvation-induced uptake of ammonium into Arabidopsis roots.</title>
        <authorList>
            <person name="Gazzarrini S."/>
            <person name="Lejay L."/>
            <person name="Gojon A."/>
            <person name="Ninnemann O."/>
            <person name="Frommer W.B."/>
            <person name="von Wiren N."/>
        </authorList>
    </citation>
    <scope>TISSUE SPECIFICITY</scope>
    <source>
        <strain>cv. C24</strain>
    </source>
</reference>
<reference key="6">
    <citation type="journal article" date="2002" name="Plant Physiol.">
        <title>Functional analysis of an Arabidopsis T-DNA 'knockout' of the high-affinity NH4(+) transporter AtAMT1;1.</title>
        <authorList>
            <person name="Kaiser B.N."/>
            <person name="Rawat S.R."/>
            <person name="Siddiqi M.Y."/>
            <person name="Masle J."/>
            <person name="Glass A.D.M."/>
        </authorList>
    </citation>
    <scope>DISRUPTION PHENOTYPE</scope>
</reference>
<reference key="7">
    <citation type="journal article" date="2002" name="Plant Physiol.">
        <title>Characterization of Arabidopsis AtAMT2, a high-affinity ammonium transporter of the plasma membrane.</title>
        <authorList>
            <person name="Sohlenkamp C."/>
            <person name="Wood C.C."/>
            <person name="Roeb G.W."/>
            <person name="Udvardi M.K."/>
        </authorList>
    </citation>
    <scope>FUNCTION</scope>
    <scope>BIOPHYSICOCHEMICAL PROPERTIES</scope>
</reference>
<reference key="8">
    <citation type="journal article" date="2003" name="Mol. Cell. Proteomics">
        <title>Large-scale analysis of in vivo phosphorylated membrane proteins by immobilized metal ion affinity chromatography and mass spectrometry.</title>
        <authorList>
            <person name="Nuehse T.S."/>
            <person name="Stensballe A."/>
            <person name="Jensen O.N."/>
            <person name="Peck S.C."/>
        </authorList>
    </citation>
    <scope>PHOSPHORYLATION [LARGE SCALE ANALYSIS] AT THR-460</scope>
    <scope>IDENTIFICATION BY MASS SPECTROMETRY [LARGE SCALE ANALYSIS]</scope>
    <source>
        <strain>cv. La-0</strain>
    </source>
</reference>
<reference key="9">
    <citation type="journal article" date="2004" name="Plant Cell">
        <title>Phosphoproteomics of the Arabidopsis plasma membrane and a new phosphorylation site database.</title>
        <authorList>
            <person name="Nuehse T.S."/>
            <person name="Stensballe A."/>
            <person name="Jensen O.N."/>
            <person name="Peck S.C."/>
        </authorList>
    </citation>
    <scope>SUBCELLULAR LOCATION</scope>
    <scope>PHOSPHORYLATION [LARGE SCALE ANALYSIS] AT THR-460</scope>
    <scope>IDENTIFICATION BY MASS SPECTROMETRY [LARGE SCALE ANALYSIS]</scope>
</reference>
<reference key="10">
    <citation type="journal article" date="2006" name="FEBS Lett.">
        <title>Mechanisms of ammonium transport, accumulation, and retention in ooyctes and yeast cells expressing Arabidopsis AtAMT1;1.</title>
        <authorList>
            <person name="Wood C.C."/>
            <person name="Poree F."/>
            <person name="Dreyer I."/>
            <person name="Koehler G.J."/>
            <person name="Udvardi M.K."/>
        </authorList>
    </citation>
    <scope>FUNCTION</scope>
    <scope>BIOPHYSICOCHEMICAL PROPERTIES</scope>
</reference>
<reference key="11">
    <citation type="journal article" date="2006" name="Plant Biol.">
        <title>Role of AMT1;1 in NH4+ acquisition in Arabidopsis thaliana.</title>
        <authorList>
            <person name="Mayer M."/>
            <person name="Ludewig U."/>
        </authorList>
    </citation>
    <scope>FUNCTION</scope>
    <scope>SUBCELLULAR LOCATION</scope>
    <scope>TISSUE SPECIFICITY</scope>
    <scope>INDUCTION</scope>
</reference>
<reference key="12">
    <citation type="journal article" date="2006" name="Plant J.">
        <title>Additive contribution of AMT1;1 and AMT1;3 to high-affinity ammonium uptake across the plasma membrane of nitrogen-deficient Arabidopsis roots.</title>
        <authorList>
            <person name="Loque D."/>
            <person name="Yuan L."/>
            <person name="Kojima S."/>
            <person name="Gojon A."/>
            <person name="Wirth J."/>
            <person name="Gazzarrini S."/>
            <person name="Ishiyama K."/>
            <person name="Takahashi H."/>
            <person name="von Wiren N."/>
        </authorList>
    </citation>
    <scope>FUNCTION</scope>
    <scope>SUBCELLULAR LOCATION</scope>
    <scope>TISSUE SPECIFICITY</scope>
    <scope>INDUCTION</scope>
</reference>
<reference key="13">
    <citation type="journal article" date="2007" name="Biochem. Biophys. Res. Commun.">
        <title>Novel subsets of the Arabidopsis plasmalemma phosphoproteome identify phosphorylation sites in secondary active transporters.</title>
        <authorList>
            <person name="Hem S."/>
            <person name="Rofidal V."/>
            <person name="Sommerer N."/>
            <person name="Rossignol M."/>
        </authorList>
    </citation>
    <scope>PHOSPHORYLATION [LARGE SCALE ANALYSIS] AT THR-460; SER-490 AND SER-492</scope>
    <scope>IDENTIFICATION BY MASS SPECTROMETRY [LARGE SCALE ANALYSIS]</scope>
</reference>
<reference key="14">
    <citation type="journal article" date="2007" name="Plant Physiol.">
        <title>Reciprocal leaf and root expression of AtAmt1.1 and root architectural changes in response to nitrogen starvation.</title>
        <authorList>
            <person name="Engineer C.B."/>
            <person name="Kranz R.G."/>
        </authorList>
    </citation>
    <scope>TISSUE SPECIFICITY</scope>
    <scope>INDUCTION</scope>
</reference>
<reference key="15">
    <citation type="journal article" date="2007" name="Plant Physiol.">
        <title>Nitrogen-dependent posttranscriptional regulation of the ammonium transporter AtAMT1;1.</title>
        <authorList>
            <person name="Yuan L."/>
            <person name="Loque D."/>
            <person name="Ye F."/>
            <person name="Frommer W.B."/>
            <person name="von Wiren N."/>
        </authorList>
    </citation>
    <scope>INDUCTION</scope>
</reference>
<reference key="16">
    <citation type="journal article" date="2008" name="J. Proteome Res.">
        <title>Site-specific phosphorylation profiling of Arabidopsis proteins by mass spectrometry and peptide chip analysis.</title>
        <authorList>
            <person name="de la Fuente van Bentem S."/>
            <person name="Anrather D."/>
            <person name="Dohnal I."/>
            <person name="Roitinger E."/>
            <person name="Csaszar E."/>
            <person name="Joore J."/>
            <person name="Buijnink J."/>
            <person name="Carreri A."/>
            <person name="Forzani C."/>
            <person name="Lorkovic Z.J."/>
            <person name="Barta A."/>
            <person name="Lecourieux D."/>
            <person name="Verhounig A."/>
            <person name="Jonak C."/>
            <person name="Hirt H."/>
        </authorList>
    </citation>
    <scope>PHOSPHORYLATION [LARGE SCALE ANALYSIS] AT SER-475</scope>
    <scope>IDENTIFICATION BY MASS SPECTROMETRY [LARGE SCALE ANALYSIS]</scope>
    <source>
        <tissue>Root</tissue>
    </source>
</reference>
<reference key="17">
    <citation type="journal article" date="2009" name="J. Proteomics">
        <title>Phosphoproteomic analysis of nuclei-enriched fractions from Arabidopsis thaliana.</title>
        <authorList>
            <person name="Jones A.M.E."/>
            <person name="MacLean D."/>
            <person name="Studholme D.J."/>
            <person name="Serna-Sanz A."/>
            <person name="Andreasson E."/>
            <person name="Rathjen J.P."/>
            <person name="Peck S.C."/>
        </authorList>
    </citation>
    <scope>PHOSPHORYLATION [LARGE SCALE ANALYSIS] AT THR-460</scope>
    <scope>IDENTIFICATION BY MASS SPECTROMETRY [LARGE SCALE ANALYSIS]</scope>
    <source>
        <strain>cv. Columbia</strain>
    </source>
</reference>
<reference key="18">
    <citation type="journal article" date="2009" name="Plant Physiol.">
        <title>Large-scale Arabidopsis phosphoproteome profiling reveals novel chloroplast kinase substrates and phosphorylation networks.</title>
        <authorList>
            <person name="Reiland S."/>
            <person name="Messerli G."/>
            <person name="Baerenfaller K."/>
            <person name="Gerrits B."/>
            <person name="Endler A."/>
            <person name="Grossmann J."/>
            <person name="Gruissem W."/>
            <person name="Baginsky S."/>
        </authorList>
    </citation>
    <scope>PHOSPHORYLATION [LARGE SCALE ANALYSIS] AT SER-488</scope>
    <scope>IDENTIFICATION BY MASS SPECTROMETRY [LARGE SCALE ANALYSIS]</scope>
</reference>
<reference key="19">
    <citation type="journal article" date="2010" name="Front. Physiol.">
        <title>A membrane protein/signaling protein interaction network for Arabidopsis version AMPv2.</title>
        <authorList>
            <person name="Lalonde S."/>
            <person name="Sero A."/>
            <person name="Pratelli R."/>
            <person name="Pilot G."/>
            <person name="Chen J."/>
            <person name="Sardi M.I."/>
            <person name="Parsa S.A."/>
            <person name="Kim D.Y."/>
            <person name="Acharya B.R."/>
            <person name="Stein E.V."/>
            <person name="Hu H.C."/>
            <person name="Villiers F."/>
            <person name="Takeda K."/>
            <person name="Yang Y."/>
            <person name="Han Y.S."/>
            <person name="Schwacke R."/>
            <person name="Chiang W."/>
            <person name="Kato N."/>
            <person name="Loque D."/>
            <person name="Assmann S.M."/>
            <person name="Kwak J.M."/>
            <person name="Schroeder J.I."/>
            <person name="Rhee S.Y."/>
            <person name="Frommer W.B."/>
        </authorList>
    </citation>
    <scope>SUBUNIT</scope>
    <scope>INTERACTION WITH CEPR2; AT2G28990 AND PAM74</scope>
</reference>
<gene>
    <name type="primary">AMT1-1</name>
    <name type="ordered locus">At4g13510</name>
    <name type="ORF">T6G15.60</name>
</gene>
<protein>
    <recommendedName>
        <fullName>Ammonium transporter 1 member 1</fullName>
        <shortName>AtAMT1;1</shortName>
    </recommendedName>
</protein>
<sequence>MSCSATDLAVLLGPNATAAANYICGQLGDVNNKFIDTAFAIDNTYLLFSAYLVFSMQLGFAMLCAGSVRAKNTMNIMLTNVLDAAAGGLFYYLFGYAFAFGSPSNGFIGKHYFGLKDIPTASADYSNFLYQWAFAIAAAGITSGSIAERTQFVAYLIYSSFLTGFVYPVVSHWFWSVDGWASPFRTDGDLLFSTGAIDFAGSGVVHMVGGIAGLWGALIEGPRLGRFDNGGRAIALRGHSASLVVLGTFLLWFGWYGFNPGSFNKILVTYETGTYNGQWSAVGRTAVTTTLAGCTAALTTLFGKRLLSGHWNVTDVCNGLLGGFAAITGGCSVVEPWAAIICGFVAALVLLGCNKLAEKLKYDDPLEAAQLHGGCGAWGLIFTALFAQEKYLNQIYGNKPGRPHGLFMGGGGKLLGAQLIQIIVITGWVSATMGTLFFILKKMKLLRISSEDEMAGMDMTRHGGFAYMYFDDDESHKAIQLRRVEPRSPSPSGANTTPTPV</sequence>
<organism>
    <name type="scientific">Arabidopsis thaliana</name>
    <name type="common">Mouse-ear cress</name>
    <dbReference type="NCBI Taxonomy" id="3702"/>
    <lineage>
        <taxon>Eukaryota</taxon>
        <taxon>Viridiplantae</taxon>
        <taxon>Streptophyta</taxon>
        <taxon>Embryophyta</taxon>
        <taxon>Tracheophyta</taxon>
        <taxon>Spermatophyta</taxon>
        <taxon>Magnoliopsida</taxon>
        <taxon>eudicotyledons</taxon>
        <taxon>Gunneridae</taxon>
        <taxon>Pentapetalae</taxon>
        <taxon>rosids</taxon>
        <taxon>malvids</taxon>
        <taxon>Brassicales</taxon>
        <taxon>Brassicaceae</taxon>
        <taxon>Camelineae</taxon>
        <taxon>Arabidopsis</taxon>
    </lineage>
</organism>
<dbReference type="EMBL" id="X75879">
    <property type="protein sequence ID" value="CAA53473.1"/>
    <property type="molecule type" value="mRNA"/>
</dbReference>
<dbReference type="EMBL" id="AL049656">
    <property type="protein sequence ID" value="CAB41109.1"/>
    <property type="molecule type" value="Genomic_DNA"/>
</dbReference>
<dbReference type="EMBL" id="AL161536">
    <property type="protein sequence ID" value="CAB78393.1"/>
    <property type="molecule type" value="Genomic_DNA"/>
</dbReference>
<dbReference type="EMBL" id="CP002687">
    <property type="protein sequence ID" value="AEE83287.1"/>
    <property type="molecule type" value="Genomic_DNA"/>
</dbReference>
<dbReference type="EMBL" id="AY037219">
    <property type="protein sequence ID" value="AAK59819.1"/>
    <property type="status" value="ALT_FRAME"/>
    <property type="molecule type" value="mRNA"/>
</dbReference>
<dbReference type="EMBL" id="AY113167">
    <property type="protein sequence ID" value="AAM47470.1"/>
    <property type="status" value="ALT_FRAME"/>
    <property type="molecule type" value="mRNA"/>
</dbReference>
<dbReference type="PIR" id="T06653">
    <property type="entry name" value="T06653"/>
</dbReference>
<dbReference type="SMR" id="P54144"/>
<dbReference type="BioGRID" id="12280">
    <property type="interactions" value="48"/>
</dbReference>
<dbReference type="ComplexPortal" id="CPX-1330">
    <property type="entry name" value="AMT1-1 homotrimer"/>
</dbReference>
<dbReference type="ComplexPortal" id="CPX-3582">
    <property type="entry name" value="AMT1-1 - AMT1-3 heterotrimer, variant 1"/>
</dbReference>
<dbReference type="ComplexPortal" id="CPX-3583">
    <property type="entry name" value="AMT1-1 - AMT1-3 heterotrimer, variant 2"/>
</dbReference>
<dbReference type="FunCoup" id="P54144">
    <property type="interactions" value="34"/>
</dbReference>
<dbReference type="IntAct" id="P54144">
    <property type="interactions" value="34"/>
</dbReference>
<dbReference type="STRING" id="3702.P54144"/>
<dbReference type="TCDB" id="1.A.11.2.1">
    <property type="family name" value="the ammonium transporter channel (amt) family"/>
</dbReference>
<dbReference type="iPTMnet" id="P54144"/>
<dbReference type="MetOSite" id="P54144"/>
<dbReference type="PaxDb" id="3702-AT4G13510.1"/>
<dbReference type="ProteomicsDB" id="244466"/>
<dbReference type="EnsemblPlants" id="AT4G13510.1">
    <property type="protein sequence ID" value="AT4G13510.1"/>
    <property type="gene ID" value="AT4G13510"/>
</dbReference>
<dbReference type="GeneID" id="826983"/>
<dbReference type="Gramene" id="AT4G13510.1">
    <property type="protein sequence ID" value="AT4G13510.1"/>
    <property type="gene ID" value="AT4G13510"/>
</dbReference>
<dbReference type="KEGG" id="ath:AT4G13510"/>
<dbReference type="Araport" id="AT4G13510"/>
<dbReference type="TAIR" id="AT4G13510">
    <property type="gene designation" value="AMT1"/>
</dbReference>
<dbReference type="eggNOG" id="KOG0682">
    <property type="taxonomic scope" value="Eukaryota"/>
</dbReference>
<dbReference type="HOGENOM" id="CLU_000445_33_1_1"/>
<dbReference type="InParanoid" id="P54144"/>
<dbReference type="OMA" id="FNAGSWL"/>
<dbReference type="OrthoDB" id="534912at2759"/>
<dbReference type="PhylomeDB" id="P54144"/>
<dbReference type="BioCyc" id="ARA:AT4G13510-MONOMER"/>
<dbReference type="BioCyc" id="MetaCyc:AT4G13510-MONOMER"/>
<dbReference type="SABIO-RK" id="P54144"/>
<dbReference type="PRO" id="PR:P54144"/>
<dbReference type="Proteomes" id="UP000006548">
    <property type="component" value="Chromosome 4"/>
</dbReference>
<dbReference type="ExpressionAtlas" id="P54144">
    <property type="expression patterns" value="baseline and differential"/>
</dbReference>
<dbReference type="GO" id="GO:0110067">
    <property type="term" value="C:ammonium transmembrane transporter complex"/>
    <property type="evidence" value="ECO:0000314"/>
    <property type="project" value="ComplexPortal"/>
</dbReference>
<dbReference type="GO" id="GO:0005886">
    <property type="term" value="C:plasma membrane"/>
    <property type="evidence" value="ECO:0000314"/>
    <property type="project" value="TAIR"/>
</dbReference>
<dbReference type="GO" id="GO:0009506">
    <property type="term" value="C:plasmodesma"/>
    <property type="evidence" value="ECO:0007005"/>
    <property type="project" value="TAIR"/>
</dbReference>
<dbReference type="GO" id="GO:0008519">
    <property type="term" value="F:ammonium channel activity"/>
    <property type="evidence" value="ECO:0000314"/>
    <property type="project" value="TAIR"/>
</dbReference>
<dbReference type="GO" id="GO:0072488">
    <property type="term" value="P:ammonium transmembrane transport"/>
    <property type="evidence" value="ECO:0000315"/>
    <property type="project" value="ComplexPortal"/>
</dbReference>
<dbReference type="GO" id="GO:0080181">
    <property type="term" value="P:lateral root branching"/>
    <property type="evidence" value="ECO:0000315"/>
    <property type="project" value="TAIR"/>
</dbReference>
<dbReference type="GO" id="GO:0010311">
    <property type="term" value="P:lateral root formation"/>
    <property type="evidence" value="ECO:0000315"/>
    <property type="project" value="TAIR"/>
</dbReference>
<dbReference type="GO" id="GO:0051258">
    <property type="term" value="P:protein polymerization"/>
    <property type="evidence" value="ECO:0000314"/>
    <property type="project" value="TAIR"/>
</dbReference>
<dbReference type="FunFam" id="1.10.3430.10:FF:000006">
    <property type="entry name" value="Ammonium transporter"/>
    <property type="match status" value="1"/>
</dbReference>
<dbReference type="Gene3D" id="1.10.3430.10">
    <property type="entry name" value="Ammonium transporter AmtB like domains"/>
    <property type="match status" value="1"/>
</dbReference>
<dbReference type="InterPro" id="IPR029020">
    <property type="entry name" value="Ammonium/urea_transptr"/>
</dbReference>
<dbReference type="InterPro" id="IPR001905">
    <property type="entry name" value="Ammonium_transpt"/>
</dbReference>
<dbReference type="InterPro" id="IPR018047">
    <property type="entry name" value="Ammonium_transpt_CS"/>
</dbReference>
<dbReference type="InterPro" id="IPR024041">
    <property type="entry name" value="NH4_transpt_AmtB-like_dom"/>
</dbReference>
<dbReference type="NCBIfam" id="TIGR00836">
    <property type="entry name" value="amt"/>
    <property type="match status" value="1"/>
</dbReference>
<dbReference type="PANTHER" id="PTHR11730">
    <property type="entry name" value="AMMONIUM TRANSPORTER"/>
    <property type="match status" value="1"/>
</dbReference>
<dbReference type="PANTHER" id="PTHR11730:SF121">
    <property type="entry name" value="AMMONIUM TRANSPORTER 1 MEMBER 1"/>
    <property type="match status" value="1"/>
</dbReference>
<dbReference type="Pfam" id="PF00909">
    <property type="entry name" value="Ammonium_transp"/>
    <property type="match status" value="1"/>
</dbReference>
<dbReference type="SUPFAM" id="SSF111352">
    <property type="entry name" value="Ammonium transporter"/>
    <property type="match status" value="1"/>
</dbReference>
<dbReference type="PROSITE" id="PS01219">
    <property type="entry name" value="AMMONIUM_TRANSP"/>
    <property type="match status" value="1"/>
</dbReference>
<feature type="chain" id="PRO_0000224180" description="Ammonium transporter 1 member 1">
    <location>
        <begin position="1"/>
        <end position="501"/>
    </location>
</feature>
<feature type="transmembrane region" description="Helical" evidence="1">
    <location>
        <begin position="8"/>
        <end position="28"/>
    </location>
</feature>
<feature type="transmembrane region" description="Helical" evidence="1">
    <location>
        <begin position="46"/>
        <end position="66"/>
    </location>
</feature>
<feature type="transmembrane region" description="Helical" evidence="1">
    <location>
        <begin position="81"/>
        <end position="101"/>
    </location>
</feature>
<feature type="transmembrane region" description="Helical" evidence="1">
    <location>
        <begin position="128"/>
        <end position="148"/>
    </location>
</feature>
<feature type="transmembrane region" description="Helical" evidence="1">
    <location>
        <begin position="152"/>
        <end position="172"/>
    </location>
</feature>
<feature type="transmembrane region" description="Helical" evidence="1">
    <location>
        <begin position="199"/>
        <end position="219"/>
    </location>
</feature>
<feature type="transmembrane region" description="Helical" evidence="1">
    <location>
        <begin position="243"/>
        <end position="263"/>
    </location>
</feature>
<feature type="transmembrane region" description="Helical" evidence="1">
    <location>
        <begin position="333"/>
        <end position="353"/>
    </location>
</feature>
<feature type="transmembrane region" description="Helical" evidence="1">
    <location>
        <begin position="366"/>
        <end position="386"/>
    </location>
</feature>
<feature type="transmembrane region" description="Helical" evidence="1">
    <location>
        <begin position="419"/>
        <end position="439"/>
    </location>
</feature>
<feature type="modified residue" description="Phosphothreonine" evidence="13 14 15 17">
    <location>
        <position position="460"/>
    </location>
</feature>
<feature type="modified residue" description="Phosphoserine" evidence="16">
    <location>
        <position position="475"/>
    </location>
</feature>
<feature type="modified residue" description="Phosphoserine" evidence="18">
    <location>
        <position position="488"/>
    </location>
</feature>
<feature type="modified residue" description="Phosphoserine" evidence="15">
    <location>
        <position position="490"/>
    </location>
</feature>
<feature type="modified residue" description="Phosphoserine" evidence="15">
    <location>
        <position position="492"/>
    </location>
</feature>
<name>AMT11_ARATH</name>
<keyword id="KW-0924">Ammonia transport</keyword>
<keyword id="KW-1003">Cell membrane</keyword>
<keyword id="KW-0472">Membrane</keyword>
<keyword id="KW-0597">Phosphoprotein</keyword>
<keyword id="KW-1185">Reference proteome</keyword>
<keyword id="KW-0812">Transmembrane</keyword>
<keyword id="KW-1133">Transmembrane helix</keyword>
<keyword id="KW-0813">Transport</keyword>